<gene>
    <name evidence="5" type="primary">dhaK-1</name>
    <name type="ordered locus">lin2843</name>
</gene>
<dbReference type="EC" id="2.7.1.121" evidence="2"/>
<dbReference type="EMBL" id="AL596173">
    <property type="protein sequence ID" value="CAC98069.1"/>
    <property type="molecule type" value="Genomic_DNA"/>
</dbReference>
<dbReference type="PIR" id="AE1787">
    <property type="entry name" value="AE1787"/>
</dbReference>
<dbReference type="RefSeq" id="WP_003772865.1">
    <property type="nucleotide sequence ID" value="NC_003212.1"/>
</dbReference>
<dbReference type="SMR" id="Q927E6"/>
<dbReference type="STRING" id="272626.gene:17567230"/>
<dbReference type="GeneID" id="93236117"/>
<dbReference type="KEGG" id="lin:lin2843"/>
<dbReference type="eggNOG" id="COG2376">
    <property type="taxonomic scope" value="Bacteria"/>
</dbReference>
<dbReference type="HOGENOM" id="CLU_017054_0_0_9"/>
<dbReference type="OrthoDB" id="9806345at2"/>
<dbReference type="UniPathway" id="UPA00616"/>
<dbReference type="Proteomes" id="UP000002513">
    <property type="component" value="Chromosome"/>
</dbReference>
<dbReference type="GO" id="GO:0005829">
    <property type="term" value="C:cytosol"/>
    <property type="evidence" value="ECO:0007669"/>
    <property type="project" value="TreeGrafter"/>
</dbReference>
<dbReference type="GO" id="GO:0004371">
    <property type="term" value="F:glycerone kinase activity"/>
    <property type="evidence" value="ECO:0007669"/>
    <property type="project" value="InterPro"/>
</dbReference>
<dbReference type="GO" id="GO:0047324">
    <property type="term" value="F:phosphoenolpyruvate-glycerone phosphotransferase activity"/>
    <property type="evidence" value="ECO:0000250"/>
    <property type="project" value="UniProtKB"/>
</dbReference>
<dbReference type="GO" id="GO:0019563">
    <property type="term" value="P:glycerol catabolic process"/>
    <property type="evidence" value="ECO:0007669"/>
    <property type="project" value="UniProtKB-UniPathway"/>
</dbReference>
<dbReference type="FunFam" id="3.30.1180.20:FF:000002">
    <property type="entry name" value="Dihydroxyacetone kinase subunit DhaK"/>
    <property type="match status" value="1"/>
</dbReference>
<dbReference type="FunFam" id="3.40.50.10440:FF:000001">
    <property type="entry name" value="Dihydroxyacetone kinase, DhaK subunit"/>
    <property type="match status" value="1"/>
</dbReference>
<dbReference type="Gene3D" id="3.40.50.10440">
    <property type="entry name" value="Dihydroxyacetone kinase, domain 1"/>
    <property type="match status" value="1"/>
</dbReference>
<dbReference type="Gene3D" id="3.30.1180.20">
    <property type="entry name" value="Dihydroxyacetone kinase, domain 2"/>
    <property type="match status" value="1"/>
</dbReference>
<dbReference type="InterPro" id="IPR012736">
    <property type="entry name" value="DhaK_1"/>
</dbReference>
<dbReference type="InterPro" id="IPR004006">
    <property type="entry name" value="DhaK_dom"/>
</dbReference>
<dbReference type="InterPro" id="IPR050861">
    <property type="entry name" value="Dihydroxyacetone_Kinase"/>
</dbReference>
<dbReference type="NCBIfam" id="TIGR02363">
    <property type="entry name" value="dhaK1"/>
    <property type="match status" value="1"/>
</dbReference>
<dbReference type="PANTHER" id="PTHR28629">
    <property type="entry name" value="TRIOKINASE/FMN CYCLASE"/>
    <property type="match status" value="1"/>
</dbReference>
<dbReference type="PANTHER" id="PTHR28629:SF4">
    <property type="entry name" value="TRIOKINASE_FMN CYCLASE"/>
    <property type="match status" value="1"/>
</dbReference>
<dbReference type="Pfam" id="PF02733">
    <property type="entry name" value="Dak1"/>
    <property type="match status" value="1"/>
</dbReference>
<dbReference type="SUPFAM" id="SSF82549">
    <property type="entry name" value="DAK1/DegV-like"/>
    <property type="match status" value="1"/>
</dbReference>
<dbReference type="PROSITE" id="PS51481">
    <property type="entry name" value="DHAK"/>
    <property type="match status" value="1"/>
</dbReference>
<comment type="function">
    <text evidence="2">Dihydroxyacetone binding subunit of the dihydroxyacetone kinase, which is responsible for the phosphoenolpyruvate (PEP)-dependent phosphorylation of dihydroxyacetone via a phosphoryl group transfer from DhaL-ATP.</text>
</comment>
<comment type="catalytic activity">
    <reaction evidence="2">
        <text>dihydroxyacetone + phosphoenolpyruvate = dihydroxyacetone phosphate + pyruvate</text>
        <dbReference type="Rhea" id="RHEA:18381"/>
        <dbReference type="ChEBI" id="CHEBI:15361"/>
        <dbReference type="ChEBI" id="CHEBI:16016"/>
        <dbReference type="ChEBI" id="CHEBI:57642"/>
        <dbReference type="ChEBI" id="CHEBI:58702"/>
        <dbReference type="EC" id="2.7.1.121"/>
    </reaction>
</comment>
<comment type="pathway">
    <text evidence="6">Polyol metabolism; glycerol degradation.</text>
</comment>
<comment type="subunit">
    <text evidence="3">Homodimer. The dihydroxyacetone kinase complex is composed of a homodimer of DhaM, a homodimer of DhaK and the subunit DhaL.</text>
</comment>
<comment type="subcellular location">
    <subcellularLocation>
        <location evidence="2">Cytoplasm</location>
    </subcellularLocation>
</comment>
<comment type="miscellaneous">
    <text evidence="2">Unlike the carbohydrate-specific transporters of the PTS, the complex DhaKML has no transport activity.</text>
</comment>
<sequence>MKKILNGTDQVVEQMVEGLVKSHADVVHRVEGTRVIARNDKRPGKVGLVSGGGSGHEPAHAGYVGRGMLSAAVCGDVFTSPTPDQIYEGIKAADQGAGVLLIVKNYTGDVMNFEMAADLADADDIKVEQIVVDDDIAVEDSTFTTGRRGVAGTVLVHKIIGAAAEAGASLEELKALGEKVIASVKTLGVALSPCTVPEVGHPGFELGDDEIELGIGIHGEPGFTREKIMPSARLAKQLYERISSESKLLAGDKVVVLVNGMGATPLMEQYVFANDVHELLKNAGVQVEKTLVGDYMTSLEMAGLSLTILKLEDEKWVDMLKLPVDTIAW</sequence>
<name>DHAK1_LISIN</name>
<evidence type="ECO:0000250" key="1">
    <source>
        <dbReference type="UniProtKB" id="P76015"/>
    </source>
</evidence>
<evidence type="ECO:0000250" key="2">
    <source>
        <dbReference type="UniProtKB" id="Q92EU2"/>
    </source>
</evidence>
<evidence type="ECO:0000250" key="3">
    <source>
        <dbReference type="UniProtKB" id="Q9CIV8"/>
    </source>
</evidence>
<evidence type="ECO:0000255" key="4">
    <source>
        <dbReference type="PROSITE-ProRule" id="PRU00814"/>
    </source>
</evidence>
<evidence type="ECO:0000303" key="5">
    <source>
    </source>
</evidence>
<evidence type="ECO:0000305" key="6"/>
<feature type="chain" id="PRO_0000439398" description="PTS-dependent dihydroxyacetone kinase 1, dihydroxyacetone-binding subunit DhaK">
    <location>
        <begin position="1"/>
        <end position="329"/>
    </location>
</feature>
<feature type="domain" description="DhaK" evidence="4">
    <location>
        <begin position="7"/>
        <end position="329"/>
    </location>
</feature>
<feature type="active site" description="Proton acceptor" evidence="1">
    <location>
        <position position="56"/>
    </location>
</feature>
<feature type="active site" description="Tele-hemiaminal-histidine intermediate" evidence="4">
    <location>
        <position position="218"/>
    </location>
</feature>
<feature type="binding site" evidence="3">
    <location>
        <begin position="53"/>
        <end position="56"/>
    </location>
    <ligand>
        <name>dihydroxyacetone</name>
        <dbReference type="ChEBI" id="CHEBI:16016"/>
    </ligand>
</feature>
<feature type="binding site" evidence="3">
    <location>
        <position position="104"/>
    </location>
    <ligand>
        <name>dihydroxyacetone</name>
        <dbReference type="ChEBI" id="CHEBI:16016"/>
    </ligand>
</feature>
<feature type="binding site" evidence="3 4">
    <location>
        <position position="109"/>
    </location>
    <ligand>
        <name>dihydroxyacetone</name>
        <dbReference type="ChEBI" id="CHEBI:16016"/>
    </ligand>
</feature>
<reference key="1">
    <citation type="journal article" date="2001" name="Science">
        <title>Comparative genomics of Listeria species.</title>
        <authorList>
            <person name="Glaser P."/>
            <person name="Frangeul L."/>
            <person name="Buchrieser C."/>
            <person name="Rusniok C."/>
            <person name="Amend A."/>
            <person name="Baquero F."/>
            <person name="Berche P."/>
            <person name="Bloecker H."/>
            <person name="Brandt P."/>
            <person name="Chakraborty T."/>
            <person name="Charbit A."/>
            <person name="Chetouani F."/>
            <person name="Couve E."/>
            <person name="de Daruvar A."/>
            <person name="Dehoux P."/>
            <person name="Domann E."/>
            <person name="Dominguez-Bernal G."/>
            <person name="Duchaud E."/>
            <person name="Durant L."/>
            <person name="Dussurget O."/>
            <person name="Entian K.-D."/>
            <person name="Fsihi H."/>
            <person name="Garcia-del Portillo F."/>
            <person name="Garrido P."/>
            <person name="Gautier L."/>
            <person name="Goebel W."/>
            <person name="Gomez-Lopez N."/>
            <person name="Hain T."/>
            <person name="Hauf J."/>
            <person name="Jackson D."/>
            <person name="Jones L.-M."/>
            <person name="Kaerst U."/>
            <person name="Kreft J."/>
            <person name="Kuhn M."/>
            <person name="Kunst F."/>
            <person name="Kurapkat G."/>
            <person name="Madueno E."/>
            <person name="Maitournam A."/>
            <person name="Mata Vicente J."/>
            <person name="Ng E."/>
            <person name="Nedjari H."/>
            <person name="Nordsiek G."/>
            <person name="Novella S."/>
            <person name="de Pablos B."/>
            <person name="Perez-Diaz J.-C."/>
            <person name="Purcell R."/>
            <person name="Remmel B."/>
            <person name="Rose M."/>
            <person name="Schlueter T."/>
            <person name="Simoes N."/>
            <person name="Tierrez A."/>
            <person name="Vazquez-Boland J.-A."/>
            <person name="Voss H."/>
            <person name="Wehland J."/>
            <person name="Cossart P."/>
        </authorList>
    </citation>
    <scope>NUCLEOTIDE SEQUENCE [LARGE SCALE GENOMIC DNA]</scope>
    <source>
        <strain>ATCC BAA-680 / CLIP 11262</strain>
    </source>
</reference>
<reference key="2">
    <citation type="journal article" date="2012" name="J. Bacteriol.">
        <title>Novel listerial glycerol dehydrogenase- and phosphoenolpyruvate-dependent dihydroxyacetone kinase system connected to the pentose phosphate pathway.</title>
        <authorList>
            <person name="Monniot C."/>
            <person name="Zebre A.C."/>
            <person name="Ake F.M."/>
            <person name="Deutscher J."/>
            <person name="Milohanic E."/>
        </authorList>
    </citation>
    <scope>NOMENCLATURE</scope>
    <source>
        <strain>ATCC BAA-680 / CLIP 11262</strain>
    </source>
</reference>
<accession>Q927E6</accession>
<protein>
    <recommendedName>
        <fullName evidence="2">PTS-dependent dihydroxyacetone kinase 1, dihydroxyacetone-binding subunit DhaK</fullName>
        <ecNumber evidence="2">2.7.1.121</ecNumber>
    </recommendedName>
</protein>
<keyword id="KW-0963">Cytoplasm</keyword>
<keyword id="KW-0319">Glycerol metabolism</keyword>
<keyword id="KW-0418">Kinase</keyword>
<keyword id="KW-0808">Transferase</keyword>
<proteinExistence type="inferred from homology"/>
<organism>
    <name type="scientific">Listeria innocua serovar 6a (strain ATCC BAA-680 / CLIP 11262)</name>
    <dbReference type="NCBI Taxonomy" id="272626"/>
    <lineage>
        <taxon>Bacteria</taxon>
        <taxon>Bacillati</taxon>
        <taxon>Bacillota</taxon>
        <taxon>Bacilli</taxon>
        <taxon>Bacillales</taxon>
        <taxon>Listeriaceae</taxon>
        <taxon>Listeria</taxon>
    </lineage>
</organism>